<protein>
    <recommendedName>
        <fullName evidence="2">tRNA (guanine-N(7)-)-methyltransferase</fullName>
        <ecNumber evidence="2">2.1.1.33</ecNumber>
    </recommendedName>
    <alternativeName>
        <fullName evidence="2">tRNA (guanine(46)-N(7))-methyltransferase</fullName>
    </alternativeName>
    <alternativeName>
        <fullName evidence="2">tRNA(m7G46)-methyltransferase</fullName>
    </alternativeName>
</protein>
<feature type="chain" id="PRO_1000064409" description="tRNA (guanine-N(7)-)-methyltransferase">
    <location>
        <begin position="1"/>
        <end position="238"/>
    </location>
</feature>
<feature type="active site" evidence="1">
    <location>
        <position position="143"/>
    </location>
</feature>
<feature type="binding site" evidence="2">
    <location>
        <position position="68"/>
    </location>
    <ligand>
        <name>S-adenosyl-L-methionine</name>
        <dbReference type="ChEBI" id="CHEBI:59789"/>
    </ligand>
</feature>
<feature type="binding site" evidence="2">
    <location>
        <position position="93"/>
    </location>
    <ligand>
        <name>S-adenosyl-L-methionine</name>
        <dbReference type="ChEBI" id="CHEBI:59789"/>
    </ligand>
</feature>
<feature type="binding site" evidence="2">
    <location>
        <position position="120"/>
    </location>
    <ligand>
        <name>S-adenosyl-L-methionine</name>
        <dbReference type="ChEBI" id="CHEBI:59789"/>
    </ligand>
</feature>
<feature type="binding site" evidence="2">
    <location>
        <position position="143"/>
    </location>
    <ligand>
        <name>S-adenosyl-L-methionine</name>
        <dbReference type="ChEBI" id="CHEBI:59789"/>
    </ligand>
</feature>
<feature type="binding site" evidence="2">
    <location>
        <position position="147"/>
    </location>
    <ligand>
        <name>substrate</name>
    </ligand>
</feature>
<feature type="binding site" evidence="2">
    <location>
        <position position="179"/>
    </location>
    <ligand>
        <name>substrate</name>
    </ligand>
</feature>
<feature type="binding site" evidence="2">
    <location>
        <begin position="216"/>
        <end position="219"/>
    </location>
    <ligand>
        <name>substrate</name>
    </ligand>
</feature>
<evidence type="ECO:0000250" key="1"/>
<evidence type="ECO:0000255" key="2">
    <source>
        <dbReference type="HAMAP-Rule" id="MF_01057"/>
    </source>
</evidence>
<accession>A6WQU4</accession>
<comment type="function">
    <text evidence="2">Catalyzes the formation of N(7)-methylguanine at position 46 (m7G46) in tRNA.</text>
</comment>
<comment type="catalytic activity">
    <reaction evidence="2">
        <text>guanosine(46) in tRNA + S-adenosyl-L-methionine = N(7)-methylguanosine(46) in tRNA + S-adenosyl-L-homocysteine</text>
        <dbReference type="Rhea" id="RHEA:42708"/>
        <dbReference type="Rhea" id="RHEA-COMP:10188"/>
        <dbReference type="Rhea" id="RHEA-COMP:10189"/>
        <dbReference type="ChEBI" id="CHEBI:57856"/>
        <dbReference type="ChEBI" id="CHEBI:59789"/>
        <dbReference type="ChEBI" id="CHEBI:74269"/>
        <dbReference type="ChEBI" id="CHEBI:74480"/>
        <dbReference type="EC" id="2.1.1.33"/>
    </reaction>
</comment>
<comment type="pathway">
    <text evidence="2">tRNA modification; N(7)-methylguanine-tRNA biosynthesis.</text>
</comment>
<comment type="similarity">
    <text evidence="2">Belongs to the class I-like SAM-binding methyltransferase superfamily. TrmB family.</text>
</comment>
<keyword id="KW-0489">Methyltransferase</keyword>
<keyword id="KW-0949">S-adenosyl-L-methionine</keyword>
<keyword id="KW-0808">Transferase</keyword>
<keyword id="KW-0819">tRNA processing</keyword>
<dbReference type="EC" id="2.1.1.33" evidence="2"/>
<dbReference type="EMBL" id="CP000753">
    <property type="protein sequence ID" value="ABS09183.1"/>
    <property type="molecule type" value="Genomic_DNA"/>
</dbReference>
<dbReference type="RefSeq" id="WP_011847376.1">
    <property type="nucleotide sequence ID" value="NC_009665.1"/>
</dbReference>
<dbReference type="SMR" id="A6WQU4"/>
<dbReference type="KEGG" id="sbm:Shew185_3052"/>
<dbReference type="HOGENOM" id="CLU_050910_0_1_6"/>
<dbReference type="UniPathway" id="UPA00989"/>
<dbReference type="GO" id="GO:0043527">
    <property type="term" value="C:tRNA methyltransferase complex"/>
    <property type="evidence" value="ECO:0007669"/>
    <property type="project" value="TreeGrafter"/>
</dbReference>
<dbReference type="GO" id="GO:0008176">
    <property type="term" value="F:tRNA (guanine(46)-N7)-methyltransferase activity"/>
    <property type="evidence" value="ECO:0007669"/>
    <property type="project" value="UniProtKB-UniRule"/>
</dbReference>
<dbReference type="CDD" id="cd02440">
    <property type="entry name" value="AdoMet_MTases"/>
    <property type="match status" value="1"/>
</dbReference>
<dbReference type="FunFam" id="3.40.50.150:FF:000024">
    <property type="entry name" value="tRNA (guanine-N(7)-)-methyltransferase"/>
    <property type="match status" value="1"/>
</dbReference>
<dbReference type="Gene3D" id="3.40.50.150">
    <property type="entry name" value="Vaccinia Virus protein VP39"/>
    <property type="match status" value="1"/>
</dbReference>
<dbReference type="HAMAP" id="MF_01057">
    <property type="entry name" value="tRNA_methyltr_TrmB"/>
    <property type="match status" value="1"/>
</dbReference>
<dbReference type="InterPro" id="IPR029063">
    <property type="entry name" value="SAM-dependent_MTases_sf"/>
</dbReference>
<dbReference type="InterPro" id="IPR003358">
    <property type="entry name" value="tRNA_(Gua-N-7)_MeTrfase_Trmb"/>
</dbReference>
<dbReference type="InterPro" id="IPR055361">
    <property type="entry name" value="tRNA_methyltr_TrmB_bact"/>
</dbReference>
<dbReference type="NCBIfam" id="TIGR00091">
    <property type="entry name" value="tRNA (guanosine(46)-N7)-methyltransferase TrmB"/>
    <property type="match status" value="1"/>
</dbReference>
<dbReference type="PANTHER" id="PTHR23417">
    <property type="entry name" value="3-DEOXY-D-MANNO-OCTULOSONIC-ACID TRANSFERASE/TRNA GUANINE-N 7 - -METHYLTRANSFERASE"/>
    <property type="match status" value="1"/>
</dbReference>
<dbReference type="PANTHER" id="PTHR23417:SF14">
    <property type="entry name" value="PENTACOTRIPEPTIDE-REPEAT REGION OF PRORP DOMAIN-CONTAINING PROTEIN"/>
    <property type="match status" value="1"/>
</dbReference>
<dbReference type="Pfam" id="PF02390">
    <property type="entry name" value="Methyltransf_4"/>
    <property type="match status" value="1"/>
</dbReference>
<dbReference type="SUPFAM" id="SSF53335">
    <property type="entry name" value="S-adenosyl-L-methionine-dependent methyltransferases"/>
    <property type="match status" value="1"/>
</dbReference>
<dbReference type="PROSITE" id="PS51625">
    <property type="entry name" value="SAM_MT_TRMB"/>
    <property type="match status" value="1"/>
</dbReference>
<reference key="1">
    <citation type="submission" date="2007-07" db="EMBL/GenBank/DDBJ databases">
        <title>Complete sequence of chromosome of Shewanella baltica OS185.</title>
        <authorList>
            <consortium name="US DOE Joint Genome Institute"/>
            <person name="Copeland A."/>
            <person name="Lucas S."/>
            <person name="Lapidus A."/>
            <person name="Barry K."/>
            <person name="Glavina del Rio T."/>
            <person name="Dalin E."/>
            <person name="Tice H."/>
            <person name="Pitluck S."/>
            <person name="Sims D."/>
            <person name="Brettin T."/>
            <person name="Bruce D."/>
            <person name="Detter J.C."/>
            <person name="Han C."/>
            <person name="Schmutz J."/>
            <person name="Larimer F."/>
            <person name="Land M."/>
            <person name="Hauser L."/>
            <person name="Kyrpides N."/>
            <person name="Mikhailova N."/>
            <person name="Brettar I."/>
            <person name="Rodrigues J."/>
            <person name="Konstantinidis K."/>
            <person name="Tiedje J."/>
            <person name="Richardson P."/>
        </authorList>
    </citation>
    <scope>NUCLEOTIDE SEQUENCE [LARGE SCALE GENOMIC DNA]</scope>
    <source>
        <strain>OS185</strain>
    </source>
</reference>
<sequence>MSEVTTAEFNEEGKYLRKIRSFVLREGRLTKGQAQAIESQWPTMGLDYSPTPLVLSDVFGREADTVLEIGFGMGASLVQMAKDAPEQNFIGIEVHKPGVGSCLSDAAIAGVTNLRVYHHDAMEVLEHAIADGSLARVQLFFPDPWHKKRHHKRRIVQAEFAELIRRKLKIGGVFHMATDWEEYSEHMLEVMQAAPGYQNQSSDGTVVPRPDHRPLTKFEARGHRLGHGVWDLMFERIA</sequence>
<proteinExistence type="inferred from homology"/>
<name>TRMB_SHEB8</name>
<organism>
    <name type="scientific">Shewanella baltica (strain OS185)</name>
    <dbReference type="NCBI Taxonomy" id="402882"/>
    <lineage>
        <taxon>Bacteria</taxon>
        <taxon>Pseudomonadati</taxon>
        <taxon>Pseudomonadota</taxon>
        <taxon>Gammaproteobacteria</taxon>
        <taxon>Alteromonadales</taxon>
        <taxon>Shewanellaceae</taxon>
        <taxon>Shewanella</taxon>
    </lineage>
</organism>
<gene>
    <name evidence="2" type="primary">trmB</name>
    <name type="ordered locus">Shew185_3052</name>
</gene>